<comment type="function">
    <text evidence="1">Chaperone involved in the maturation of iron-sulfur cluster-containing proteins. Has a low intrinsic ATPase activity which is markedly stimulated by HscB.</text>
</comment>
<comment type="disruption phenotype">
    <text evidence="2">Essential, it cannot be deleted.</text>
</comment>
<comment type="similarity">
    <text evidence="1">Belongs to the heat shock protein 70 family.</text>
</comment>
<protein>
    <recommendedName>
        <fullName evidence="1">Chaperone protein HscA homolog</fullName>
    </recommendedName>
</protein>
<sequence length="619" mass="66108">MALLQIAEPGQSPQPHQRRLAVGIDLGTTNSLVATLRSGLAESLKTPRGNDPASAVRYLPDGRRVGRAAKAAAAVDPLNTVLSVKRLMGRGIADVKLLGEQLPYRFAEGESHMPFIETVQGPKSPVEVSAEILRVLRRRAEEALGGELVGAVITVPAYFDEAQRQATKDAARLAGLDVLRLLNEPTAAAVAYGLDRGAEGVVAIYDLGGGTFDISILRLTRGVFEVLATGGDSALGGDDFDHAIANWIVEQAGLSADLDPGVQRHLLQLACAAKEALSDSGSVTLAYGPWQGELSRERFEALIEPLVARSLKACRRALRDAGIEPQEIAAVVMVGGSTRVPRVRRAAAELFDRQPLTDIDPDQVVAIGAALQADTLAGNGRDGEELLLLDVNPLSLGLETMGRLMEKVIPRNTTLPVARAQEFTTYKDGQTAMLIHVLQGERELVKDCRSLARFELRGIPPMVAGAAKIRVTFQVDADGLLNVSARELGSGYEASVQVKPSYGLTDGEIARMLKDSFEYAGGDKAARALREQQVEAQRLLEAVQAALEADGEALLSPAERAAIEAQMQALRGVLDGPDAAVIETHVRHLTQVTDAFAARRLDASVKAALSGRRLNEIEE</sequence>
<feature type="chain" id="PRO_0000078615" description="Chaperone protein HscA homolog">
    <location>
        <begin position="1"/>
        <end position="619"/>
    </location>
</feature>
<organism>
    <name type="scientific">Azotobacter vinelandii</name>
    <dbReference type="NCBI Taxonomy" id="354"/>
    <lineage>
        <taxon>Bacteria</taxon>
        <taxon>Pseudomonadati</taxon>
        <taxon>Pseudomonadota</taxon>
        <taxon>Gammaproteobacteria</taxon>
        <taxon>Pseudomonadales</taxon>
        <taxon>Pseudomonadaceae</taxon>
        <taxon>Azotobacter</taxon>
    </lineage>
</organism>
<dbReference type="EMBL" id="AF010139">
    <property type="protein sequence ID" value="AAC24478.1"/>
    <property type="molecule type" value="Genomic_DNA"/>
</dbReference>
<dbReference type="PIR" id="T44285">
    <property type="entry name" value="T44285"/>
</dbReference>
<dbReference type="SMR" id="O69221"/>
<dbReference type="GO" id="GO:0005524">
    <property type="term" value="F:ATP binding"/>
    <property type="evidence" value="ECO:0007669"/>
    <property type="project" value="UniProtKB-KW"/>
</dbReference>
<dbReference type="GO" id="GO:0016887">
    <property type="term" value="F:ATP hydrolysis activity"/>
    <property type="evidence" value="ECO:0007669"/>
    <property type="project" value="UniProtKB-UniRule"/>
</dbReference>
<dbReference type="GO" id="GO:0140662">
    <property type="term" value="F:ATP-dependent protein folding chaperone"/>
    <property type="evidence" value="ECO:0007669"/>
    <property type="project" value="InterPro"/>
</dbReference>
<dbReference type="GO" id="GO:0051082">
    <property type="term" value="F:unfolded protein binding"/>
    <property type="evidence" value="ECO:0007669"/>
    <property type="project" value="InterPro"/>
</dbReference>
<dbReference type="GO" id="GO:0016226">
    <property type="term" value="P:iron-sulfur cluster assembly"/>
    <property type="evidence" value="ECO:0007669"/>
    <property type="project" value="InterPro"/>
</dbReference>
<dbReference type="CDD" id="cd10236">
    <property type="entry name" value="ASKHA_NBD_HSP70_HscA"/>
    <property type="match status" value="1"/>
</dbReference>
<dbReference type="FunFam" id="3.30.420.40:FF:000046">
    <property type="entry name" value="Chaperone protein HscA"/>
    <property type="match status" value="1"/>
</dbReference>
<dbReference type="FunFam" id="2.60.34.10:FF:000005">
    <property type="entry name" value="Chaperone protein HscA homolog"/>
    <property type="match status" value="1"/>
</dbReference>
<dbReference type="Gene3D" id="1.20.1270.10">
    <property type="match status" value="1"/>
</dbReference>
<dbReference type="Gene3D" id="3.30.420.40">
    <property type="match status" value="2"/>
</dbReference>
<dbReference type="Gene3D" id="3.90.640.10">
    <property type="entry name" value="Actin, Chain A, domain 4"/>
    <property type="match status" value="1"/>
</dbReference>
<dbReference type="Gene3D" id="2.60.34.10">
    <property type="entry name" value="Substrate Binding Domain Of DNAk, Chain A, domain 1"/>
    <property type="match status" value="1"/>
</dbReference>
<dbReference type="HAMAP" id="MF_00679">
    <property type="entry name" value="HscA"/>
    <property type="match status" value="1"/>
</dbReference>
<dbReference type="InterPro" id="IPR043129">
    <property type="entry name" value="ATPase_NBD"/>
</dbReference>
<dbReference type="InterPro" id="IPR018181">
    <property type="entry name" value="Heat_shock_70_CS"/>
</dbReference>
<dbReference type="InterPro" id="IPR042039">
    <property type="entry name" value="HscA_NBD"/>
</dbReference>
<dbReference type="InterPro" id="IPR029048">
    <property type="entry name" value="HSP70_C_sf"/>
</dbReference>
<dbReference type="InterPro" id="IPR029047">
    <property type="entry name" value="HSP70_peptide-bd_sf"/>
</dbReference>
<dbReference type="InterPro" id="IPR013126">
    <property type="entry name" value="Hsp_70_fam"/>
</dbReference>
<dbReference type="InterPro" id="IPR010236">
    <property type="entry name" value="ISC_FeS_clus_asmbl_HscA"/>
</dbReference>
<dbReference type="NCBIfam" id="TIGR01991">
    <property type="entry name" value="HscA"/>
    <property type="match status" value="1"/>
</dbReference>
<dbReference type="NCBIfam" id="NF003520">
    <property type="entry name" value="PRK05183.1"/>
    <property type="match status" value="1"/>
</dbReference>
<dbReference type="PANTHER" id="PTHR19375">
    <property type="entry name" value="HEAT SHOCK PROTEIN 70KDA"/>
    <property type="match status" value="1"/>
</dbReference>
<dbReference type="Pfam" id="PF00012">
    <property type="entry name" value="HSP70"/>
    <property type="match status" value="1"/>
</dbReference>
<dbReference type="PRINTS" id="PR00301">
    <property type="entry name" value="HEATSHOCK70"/>
</dbReference>
<dbReference type="SUPFAM" id="SSF53067">
    <property type="entry name" value="Actin-like ATPase domain"/>
    <property type="match status" value="2"/>
</dbReference>
<dbReference type="SUPFAM" id="SSF100934">
    <property type="entry name" value="Heat shock protein 70kD (HSP70), C-terminal subdomain"/>
    <property type="match status" value="1"/>
</dbReference>
<dbReference type="SUPFAM" id="SSF100920">
    <property type="entry name" value="Heat shock protein 70kD (HSP70), peptide-binding domain"/>
    <property type="match status" value="1"/>
</dbReference>
<dbReference type="PROSITE" id="PS00297">
    <property type="entry name" value="HSP70_1"/>
    <property type="match status" value="1"/>
</dbReference>
<dbReference type="PROSITE" id="PS00329">
    <property type="entry name" value="HSP70_2"/>
    <property type="match status" value="1"/>
</dbReference>
<dbReference type="PROSITE" id="PS01036">
    <property type="entry name" value="HSP70_3"/>
    <property type="match status" value="1"/>
</dbReference>
<name>HSCA_AZOVI</name>
<reference key="1">
    <citation type="journal article" date="1998" name="J. Biol. Chem.">
        <title>Assembly of iron-sulfur clusters. Identification of an iscSUA-hscBA-fdx gene cluster from Azotobacter vinelandii.</title>
        <authorList>
            <person name="Zheng L."/>
            <person name="Cash V.L."/>
            <person name="Flint D.H."/>
            <person name="Dean D.R."/>
        </authorList>
    </citation>
    <scope>NUCLEOTIDE SEQUENCE [GENOMIC DNA]</scope>
    <scope>DISRUPTION PHENOTYPE</scope>
    <source>
        <strain>ATCC 13705 / OP1 / DSM 366 / NCIMB 11614 / LMG 3878 / UW</strain>
    </source>
</reference>
<gene>
    <name evidence="1" type="primary">hscA</name>
</gene>
<keyword id="KW-0067">ATP-binding</keyword>
<keyword id="KW-0143">Chaperone</keyword>
<keyword id="KW-0547">Nucleotide-binding</keyword>
<proteinExistence type="inferred from homology"/>
<accession>O69221</accession>
<evidence type="ECO:0000255" key="1">
    <source>
        <dbReference type="HAMAP-Rule" id="MF_00679"/>
    </source>
</evidence>
<evidence type="ECO:0000269" key="2">
    <source>
    </source>
</evidence>